<keyword id="KW-0143">Chaperone</keyword>
<keyword id="KW-0963">Cytoplasm</keyword>
<keyword id="KW-0996">Nickel insertion</keyword>
<keyword id="KW-1185">Reference proteome</keyword>
<proteinExistence type="inferred from homology"/>
<sequence>MSTNPAGGLLPLIRLLQLASPALPVGAYTYSQGLEWAVECGTVRTEADARRWIGDVLEWSLARFEAPLVARLLAAWADGDDAEVARLNEDFLASRETSELRAETVQMGYSLVRLLADLDAFAGLPGWKARLVALDTPAFPVAWTAAAAAWRIPADQALSAYLWAWLENQVMAAVKAVPLGQSAGQRLLADLGAAVPALVEAAQCLPEAEWSNFTPGLAIASSRHETQYTRLFRS</sequence>
<feature type="chain" id="PRO_0000344074" description="Urease accessory protein UreF">
    <location>
        <begin position="1"/>
        <end position="234"/>
    </location>
</feature>
<protein>
    <recommendedName>
        <fullName evidence="1">Urease accessory protein UreF</fullName>
    </recommendedName>
</protein>
<accession>A1KBB2</accession>
<organism>
    <name type="scientific">Azoarcus sp. (strain BH72)</name>
    <dbReference type="NCBI Taxonomy" id="418699"/>
    <lineage>
        <taxon>Bacteria</taxon>
        <taxon>Pseudomonadati</taxon>
        <taxon>Pseudomonadota</taxon>
        <taxon>Betaproteobacteria</taxon>
        <taxon>Rhodocyclales</taxon>
        <taxon>Zoogloeaceae</taxon>
        <taxon>Azoarcus</taxon>
    </lineage>
</organism>
<comment type="function">
    <text evidence="1">Required for maturation of urease via the functional incorporation of the urease nickel metallocenter.</text>
</comment>
<comment type="subunit">
    <text evidence="1">UreD, UreF and UreG form a complex that acts as a GTP-hydrolysis-dependent molecular chaperone, activating the urease apoprotein by helping to assemble the nickel containing metallocenter of UreC. The UreE protein probably delivers the nickel.</text>
</comment>
<comment type="subcellular location">
    <subcellularLocation>
        <location evidence="1">Cytoplasm</location>
    </subcellularLocation>
</comment>
<comment type="similarity">
    <text evidence="1">Belongs to the UreF family.</text>
</comment>
<name>UREF_AZOSB</name>
<evidence type="ECO:0000255" key="1">
    <source>
        <dbReference type="HAMAP-Rule" id="MF_01385"/>
    </source>
</evidence>
<dbReference type="EMBL" id="AM406670">
    <property type="protein sequence ID" value="CAL96118.1"/>
    <property type="molecule type" value="Genomic_DNA"/>
</dbReference>
<dbReference type="RefSeq" id="WP_011767224.1">
    <property type="nucleotide sequence ID" value="NC_008702.1"/>
</dbReference>
<dbReference type="SMR" id="A1KBB2"/>
<dbReference type="STRING" id="62928.azo3502"/>
<dbReference type="KEGG" id="azo:azo3502"/>
<dbReference type="eggNOG" id="COG0830">
    <property type="taxonomic scope" value="Bacteria"/>
</dbReference>
<dbReference type="HOGENOM" id="CLU_049215_2_1_4"/>
<dbReference type="Proteomes" id="UP000002588">
    <property type="component" value="Chromosome"/>
</dbReference>
<dbReference type="GO" id="GO:0005737">
    <property type="term" value="C:cytoplasm"/>
    <property type="evidence" value="ECO:0007669"/>
    <property type="project" value="UniProtKB-SubCell"/>
</dbReference>
<dbReference type="GO" id="GO:0016151">
    <property type="term" value="F:nickel cation binding"/>
    <property type="evidence" value="ECO:0007669"/>
    <property type="project" value="UniProtKB-UniRule"/>
</dbReference>
<dbReference type="Gene3D" id="1.10.4190.10">
    <property type="entry name" value="Urease accessory protein UreF"/>
    <property type="match status" value="1"/>
</dbReference>
<dbReference type="HAMAP" id="MF_01385">
    <property type="entry name" value="UreF"/>
    <property type="match status" value="1"/>
</dbReference>
<dbReference type="InterPro" id="IPR002639">
    <property type="entry name" value="UreF"/>
</dbReference>
<dbReference type="InterPro" id="IPR038277">
    <property type="entry name" value="UreF_sf"/>
</dbReference>
<dbReference type="PANTHER" id="PTHR33620">
    <property type="entry name" value="UREASE ACCESSORY PROTEIN F"/>
    <property type="match status" value="1"/>
</dbReference>
<dbReference type="PANTHER" id="PTHR33620:SF1">
    <property type="entry name" value="UREASE ACCESSORY PROTEIN F"/>
    <property type="match status" value="1"/>
</dbReference>
<dbReference type="Pfam" id="PF01730">
    <property type="entry name" value="UreF"/>
    <property type="match status" value="1"/>
</dbReference>
<dbReference type="PIRSF" id="PIRSF009467">
    <property type="entry name" value="Ureas_acces_UreF"/>
    <property type="match status" value="1"/>
</dbReference>
<reference key="1">
    <citation type="journal article" date="2006" name="Nat. Biotechnol.">
        <title>Complete genome of the mutualistic, N2-fixing grass endophyte Azoarcus sp. strain BH72.</title>
        <authorList>
            <person name="Krause A."/>
            <person name="Ramakumar A."/>
            <person name="Bartels D."/>
            <person name="Battistoni F."/>
            <person name="Bekel T."/>
            <person name="Boch J."/>
            <person name="Boehm M."/>
            <person name="Friedrich F."/>
            <person name="Hurek T."/>
            <person name="Krause L."/>
            <person name="Linke B."/>
            <person name="McHardy A.C."/>
            <person name="Sarkar A."/>
            <person name="Schneiker S."/>
            <person name="Syed A.A."/>
            <person name="Thauer R."/>
            <person name="Vorhoelter F.-J."/>
            <person name="Weidner S."/>
            <person name="Puehler A."/>
            <person name="Reinhold-Hurek B."/>
            <person name="Kaiser O."/>
            <person name="Goesmann A."/>
        </authorList>
    </citation>
    <scope>NUCLEOTIDE SEQUENCE [LARGE SCALE GENOMIC DNA]</scope>
    <source>
        <strain>BH72</strain>
    </source>
</reference>
<gene>
    <name evidence="1" type="primary">ureF</name>
    <name type="ordered locus">azo3502</name>
</gene>